<reference key="1">
    <citation type="journal article" date="1992" name="Biochem. Biophys. Res. Commun.">
        <title>Cloning and expression of rat preproendothelin-3 cDNA.</title>
        <authorList>
            <person name="Shiba R."/>
            <person name="Sakurai T."/>
            <person name="Yamada G."/>
            <person name="Morimoto H."/>
            <person name="Saito A."/>
            <person name="Masaki T."/>
            <person name="Goto K."/>
        </authorList>
    </citation>
    <scope>NUCLEOTIDE SEQUENCE [MRNA]</scope>
</reference>
<reference key="2">
    <citation type="journal article" date="1988" name="Proc. Natl. Acad. Sci. U.S.A.">
        <title>Primary structure, synthesis, and biological activity of rat endothelin, an endothelium-derived vasoconstrictor peptide.</title>
        <authorList>
            <person name="Yanagisawa M."/>
            <person name="Inoue A."/>
            <person name="Ishikawa T."/>
            <person name="Kasuya Y."/>
            <person name="Kimura S."/>
            <person name="Kumagaye S."/>
            <person name="Nakajima K."/>
            <person name="Watanabe T.X."/>
            <person name="Sakakibara S."/>
            <person name="Goto K."/>
            <person name="Masaki T."/>
        </authorList>
    </citation>
    <scope>NUCLEOTIDE SEQUENCE [GENOMIC DNA] OF 48-77</scope>
</reference>
<feature type="signal peptide" evidence="2">
    <location>
        <begin position="1"/>
        <end position="19"/>
    </location>
</feature>
<feature type="propeptide" id="PRO_0000008120">
    <location>
        <begin position="20"/>
        <end position="50"/>
    </location>
</feature>
<feature type="peptide" id="PRO_0000008121" description="Endothelin-3">
    <location>
        <begin position="53"/>
        <end position="73"/>
    </location>
</feature>
<feature type="propeptide" id="PRO_0000008122">
    <location>
        <begin position="74"/>
        <end position="167"/>
    </location>
</feature>
<feature type="region of interest" description="Disordered" evidence="3">
    <location>
        <begin position="22"/>
        <end position="45"/>
    </location>
</feature>
<feature type="region of interest" description="Disordered" evidence="3">
    <location>
        <begin position="85"/>
        <end position="112"/>
    </location>
</feature>
<feature type="region of interest" description="Endothelin-like">
    <location>
        <begin position="115"/>
        <end position="135"/>
    </location>
</feature>
<feature type="region of interest" description="Disordered" evidence="3">
    <location>
        <begin position="140"/>
        <end position="167"/>
    </location>
</feature>
<feature type="compositionally biased region" description="Low complexity" evidence="3">
    <location>
        <begin position="97"/>
        <end position="109"/>
    </location>
</feature>
<feature type="compositionally biased region" description="Basic and acidic residues" evidence="3">
    <location>
        <begin position="140"/>
        <end position="149"/>
    </location>
</feature>
<feature type="site" description="Cleavage; by KEL" evidence="1">
    <location>
        <begin position="73"/>
        <end position="74"/>
    </location>
</feature>
<feature type="disulfide bond" evidence="1">
    <location>
        <begin position="53"/>
        <end position="67"/>
    </location>
</feature>
<feature type="disulfide bond" evidence="1">
    <location>
        <begin position="55"/>
        <end position="63"/>
    </location>
</feature>
<dbReference type="EMBL" id="S39779">
    <property type="protein sequence ID" value="AAB22502.1"/>
    <property type="molecule type" value="mRNA"/>
</dbReference>
<dbReference type="EMBL" id="J04075">
    <property type="status" value="NOT_ANNOTATED_CDS"/>
    <property type="molecule type" value="Genomic_DNA"/>
</dbReference>
<dbReference type="PIR" id="JC1102">
    <property type="entry name" value="JC1102"/>
</dbReference>
<dbReference type="RefSeq" id="NP_001071118.1">
    <property type="nucleotide sequence ID" value="NM_001077650.1"/>
</dbReference>
<dbReference type="BMRB" id="P13207"/>
<dbReference type="FunCoup" id="P13207">
    <property type="interactions" value="52"/>
</dbReference>
<dbReference type="STRING" id="10116.ENSRNOP00000009826"/>
<dbReference type="PhosphoSitePlus" id="P13207"/>
<dbReference type="PaxDb" id="10116-ENSRNOP00000009826"/>
<dbReference type="GeneID" id="366270"/>
<dbReference type="KEGG" id="rno:366270"/>
<dbReference type="UCSC" id="RGD:2534">
    <property type="organism name" value="rat"/>
</dbReference>
<dbReference type="AGR" id="RGD:2534"/>
<dbReference type="CTD" id="1908"/>
<dbReference type="RGD" id="2534">
    <property type="gene designation" value="Edn3"/>
</dbReference>
<dbReference type="eggNOG" id="ENOG502S4W0">
    <property type="taxonomic scope" value="Eukaryota"/>
</dbReference>
<dbReference type="InParanoid" id="P13207"/>
<dbReference type="PhylomeDB" id="P13207"/>
<dbReference type="Reactome" id="R-RNO-375276">
    <property type="pathway name" value="Peptide ligand-binding receptors"/>
</dbReference>
<dbReference type="Reactome" id="R-RNO-416476">
    <property type="pathway name" value="G alpha (q) signalling events"/>
</dbReference>
<dbReference type="PRO" id="PR:P13207"/>
<dbReference type="Proteomes" id="UP000002494">
    <property type="component" value="Unplaced"/>
</dbReference>
<dbReference type="GO" id="GO:0005615">
    <property type="term" value="C:extracellular space"/>
    <property type="evidence" value="ECO:0000266"/>
    <property type="project" value="RGD"/>
</dbReference>
<dbReference type="GO" id="GO:0031705">
    <property type="term" value="F:bombesin receptor binding"/>
    <property type="evidence" value="ECO:0000304"/>
    <property type="project" value="RGD"/>
</dbReference>
<dbReference type="GO" id="GO:0031708">
    <property type="term" value="F:endothelin B receptor binding"/>
    <property type="evidence" value="ECO:0000266"/>
    <property type="project" value="RGD"/>
</dbReference>
<dbReference type="GO" id="GO:0005179">
    <property type="term" value="F:hormone activity"/>
    <property type="evidence" value="ECO:0000266"/>
    <property type="project" value="RGD"/>
</dbReference>
<dbReference type="GO" id="GO:0048675">
    <property type="term" value="P:axon extension"/>
    <property type="evidence" value="ECO:0000266"/>
    <property type="project" value="RGD"/>
</dbReference>
<dbReference type="GO" id="GO:0007411">
    <property type="term" value="P:axon guidance"/>
    <property type="evidence" value="ECO:0000266"/>
    <property type="project" value="RGD"/>
</dbReference>
<dbReference type="GO" id="GO:0008283">
    <property type="term" value="P:cell population proliferation"/>
    <property type="evidence" value="ECO:0000266"/>
    <property type="project" value="RGD"/>
</dbReference>
<dbReference type="GO" id="GO:0007166">
    <property type="term" value="P:cell surface receptor signaling pathway"/>
    <property type="evidence" value="ECO:0000266"/>
    <property type="project" value="RGD"/>
</dbReference>
<dbReference type="GO" id="GO:0051649">
    <property type="term" value="P:establishment of localization in cell"/>
    <property type="evidence" value="ECO:0000266"/>
    <property type="project" value="RGD"/>
</dbReference>
<dbReference type="GO" id="GO:0006874">
    <property type="term" value="P:intracellular calcium ion homeostasis"/>
    <property type="evidence" value="ECO:0000266"/>
    <property type="project" value="RGD"/>
</dbReference>
<dbReference type="GO" id="GO:0010961">
    <property type="term" value="P:intracellular magnesium ion homeostasis"/>
    <property type="evidence" value="ECO:0000266"/>
    <property type="project" value="RGD"/>
</dbReference>
<dbReference type="GO" id="GO:0030318">
    <property type="term" value="P:melanocyte differentiation"/>
    <property type="evidence" value="ECO:0000266"/>
    <property type="project" value="RGD"/>
</dbReference>
<dbReference type="GO" id="GO:0046888">
    <property type="term" value="P:negative regulation of hormone secretion"/>
    <property type="evidence" value="ECO:0000314"/>
    <property type="project" value="RGD"/>
</dbReference>
<dbReference type="GO" id="GO:0001755">
    <property type="term" value="P:neural crest cell migration"/>
    <property type="evidence" value="ECO:0000266"/>
    <property type="project" value="RGD"/>
</dbReference>
<dbReference type="GO" id="GO:0030182">
    <property type="term" value="P:neuron differentiation"/>
    <property type="evidence" value="ECO:0000266"/>
    <property type="project" value="RGD"/>
</dbReference>
<dbReference type="GO" id="GO:0031175">
    <property type="term" value="P:neuron projection development"/>
    <property type="evidence" value="ECO:0000266"/>
    <property type="project" value="RGD"/>
</dbReference>
<dbReference type="GO" id="GO:0030593">
    <property type="term" value="P:neutrophil chemotaxis"/>
    <property type="evidence" value="ECO:0000266"/>
    <property type="project" value="RGD"/>
</dbReference>
<dbReference type="GO" id="GO:0030072">
    <property type="term" value="P:peptide hormone secretion"/>
    <property type="evidence" value="ECO:0000266"/>
    <property type="project" value="RGD"/>
</dbReference>
<dbReference type="GO" id="GO:0045597">
    <property type="term" value="P:positive regulation of cell differentiation"/>
    <property type="evidence" value="ECO:0000266"/>
    <property type="project" value="RGD"/>
</dbReference>
<dbReference type="GO" id="GO:0008284">
    <property type="term" value="P:positive regulation of cell population proliferation"/>
    <property type="evidence" value="ECO:0000266"/>
    <property type="project" value="RGD"/>
</dbReference>
<dbReference type="GO" id="GO:0010460">
    <property type="term" value="P:positive regulation of heart rate"/>
    <property type="evidence" value="ECO:0000266"/>
    <property type="project" value="RGD"/>
</dbReference>
<dbReference type="GO" id="GO:0046887">
    <property type="term" value="P:positive regulation of hormone secretion"/>
    <property type="evidence" value="ECO:0000266"/>
    <property type="project" value="RGD"/>
</dbReference>
<dbReference type="GO" id="GO:0002690">
    <property type="term" value="P:positive regulation of leukocyte chemotaxis"/>
    <property type="evidence" value="ECO:0000266"/>
    <property type="project" value="RGD"/>
</dbReference>
<dbReference type="GO" id="GO:0045840">
    <property type="term" value="P:positive regulation of mitotic nuclear division"/>
    <property type="evidence" value="ECO:0000266"/>
    <property type="project" value="RGD"/>
</dbReference>
<dbReference type="GO" id="GO:1901381">
    <property type="term" value="P:positive regulation of potassium ion transmembrane transport"/>
    <property type="evidence" value="ECO:0000266"/>
    <property type="project" value="RGD"/>
</dbReference>
<dbReference type="GO" id="GO:0045987">
    <property type="term" value="P:positive regulation of smooth muscle contraction"/>
    <property type="evidence" value="ECO:0000318"/>
    <property type="project" value="GO_Central"/>
</dbReference>
<dbReference type="GO" id="GO:0071805">
    <property type="term" value="P:potassium ion transmembrane transport"/>
    <property type="evidence" value="ECO:0000266"/>
    <property type="project" value="RGD"/>
</dbReference>
<dbReference type="GO" id="GO:0030334">
    <property type="term" value="P:regulation of cell migration"/>
    <property type="evidence" value="ECO:0000266"/>
    <property type="project" value="RGD"/>
</dbReference>
<dbReference type="GO" id="GO:0048070">
    <property type="term" value="P:regulation of developmental pigmentation"/>
    <property type="evidence" value="ECO:0000266"/>
    <property type="project" value="RGD"/>
</dbReference>
<dbReference type="GO" id="GO:0010468">
    <property type="term" value="P:regulation of gene expression"/>
    <property type="evidence" value="ECO:0000266"/>
    <property type="project" value="RGD"/>
</dbReference>
<dbReference type="GO" id="GO:0046928">
    <property type="term" value="P:regulation of neurotransmitter secretion"/>
    <property type="evidence" value="ECO:0000314"/>
    <property type="project" value="RGD"/>
</dbReference>
<dbReference type="GO" id="GO:0003100">
    <property type="term" value="P:regulation of systemic arterial blood pressure by endothelin"/>
    <property type="evidence" value="ECO:0000266"/>
    <property type="project" value="RGD"/>
</dbReference>
<dbReference type="GO" id="GO:0019229">
    <property type="term" value="P:regulation of vasoconstriction"/>
    <property type="evidence" value="ECO:0000304"/>
    <property type="project" value="RGD"/>
</dbReference>
<dbReference type="GO" id="GO:0042310">
    <property type="term" value="P:vasoconstriction"/>
    <property type="evidence" value="ECO:0000266"/>
    <property type="project" value="RGD"/>
</dbReference>
<dbReference type="GO" id="GO:0014826">
    <property type="term" value="P:vein smooth muscle contraction"/>
    <property type="evidence" value="ECO:0000266"/>
    <property type="project" value="RGD"/>
</dbReference>
<dbReference type="InterPro" id="IPR020475">
    <property type="entry name" value="Endothelin"/>
</dbReference>
<dbReference type="InterPro" id="IPR019764">
    <property type="entry name" value="Endothelin_toxin_CS"/>
</dbReference>
<dbReference type="InterPro" id="IPR001928">
    <property type="entry name" value="Endothln-like_toxin"/>
</dbReference>
<dbReference type="PANTHER" id="PTHR13874">
    <property type="entry name" value="ENDOTHELIN"/>
    <property type="match status" value="1"/>
</dbReference>
<dbReference type="PANTHER" id="PTHR13874:SF11">
    <property type="entry name" value="ENDOTHELIN-3"/>
    <property type="match status" value="1"/>
</dbReference>
<dbReference type="Pfam" id="PF00322">
    <property type="entry name" value="Endothelin"/>
    <property type="match status" value="1"/>
</dbReference>
<dbReference type="PRINTS" id="PR00365">
    <property type="entry name" value="ENDOTHELIN"/>
</dbReference>
<dbReference type="SMART" id="SM00272">
    <property type="entry name" value="END"/>
    <property type="match status" value="2"/>
</dbReference>
<dbReference type="PROSITE" id="PS00270">
    <property type="entry name" value="ENDOTHELIN"/>
    <property type="match status" value="2"/>
</dbReference>
<keyword id="KW-0165">Cleavage on pair of basic residues</keyword>
<keyword id="KW-1015">Disulfide bond</keyword>
<keyword id="KW-1185">Reference proteome</keyword>
<keyword id="KW-0964">Secreted</keyword>
<keyword id="KW-0732">Signal</keyword>
<keyword id="KW-0838">Vasoactive</keyword>
<keyword id="KW-0839">Vasoconstrictor</keyword>
<comment type="function">
    <text>Endothelins are endothelium-derived vasoconstrictor peptides.</text>
</comment>
<comment type="subcellular location">
    <subcellularLocation>
        <location>Secreted</location>
    </subcellularLocation>
</comment>
<comment type="similarity">
    <text evidence="4">Belongs to the endothelin/sarafotoxin family.</text>
</comment>
<organism>
    <name type="scientific">Rattus norvegicus</name>
    <name type="common">Rat</name>
    <dbReference type="NCBI Taxonomy" id="10116"/>
    <lineage>
        <taxon>Eukaryota</taxon>
        <taxon>Metazoa</taxon>
        <taxon>Chordata</taxon>
        <taxon>Craniata</taxon>
        <taxon>Vertebrata</taxon>
        <taxon>Euteleostomi</taxon>
        <taxon>Mammalia</taxon>
        <taxon>Eutheria</taxon>
        <taxon>Euarchontoglires</taxon>
        <taxon>Glires</taxon>
        <taxon>Rodentia</taxon>
        <taxon>Myomorpha</taxon>
        <taxon>Muroidea</taxon>
        <taxon>Muridae</taxon>
        <taxon>Murinae</taxon>
        <taxon>Rattus</taxon>
    </lineage>
</organism>
<sequence length="167" mass="18453">MELGLWLLLGLTVTSAAAALPAQPGNAGQERGPGRSGDQEEKRVPAHHRPRRCTCFTYKDKECVYYCHLDIIWINTPEQTVPYGLSNHRGSLRGKRSSGPVPESSQSSPQTRLRCACSGVDDKACAYFCAHVTSYSRRAEKAAAEEKQETGGPRQRLKSRTDKVHQP</sequence>
<name>EDN3_RAT</name>
<gene>
    <name type="primary">Edn3</name>
</gene>
<proteinExistence type="evidence at transcript level"/>
<evidence type="ECO:0000250" key="1"/>
<evidence type="ECO:0000255" key="2"/>
<evidence type="ECO:0000256" key="3">
    <source>
        <dbReference type="SAM" id="MobiDB-lite"/>
    </source>
</evidence>
<evidence type="ECO:0000305" key="4"/>
<protein>
    <recommendedName>
        <fullName>Endothelin-3</fullName>
        <shortName>ET-3</shortName>
    </recommendedName>
    <alternativeName>
        <fullName>Preproendothelin-3</fullName>
        <shortName>PPET3</shortName>
    </alternativeName>
</protein>
<accession>P13207</accession>